<reference evidence="6" key="1">
    <citation type="journal article" date="2007" name="Nature">
        <title>Evolution of genes and genomes on the Drosophila phylogeny.</title>
        <authorList>
            <consortium name="Drosophila 12 genomes consortium"/>
        </authorList>
    </citation>
    <scope>NUCLEOTIDE SEQUENCE [LARGE SCALE GENOMIC DNA]</scope>
</reference>
<gene>
    <name evidence="2" type="primary">WRNexo</name>
    <name type="ORF">GD20178</name>
</gene>
<proteinExistence type="inferred from homology"/>
<protein>
    <recommendedName>
        <fullName evidence="2">3'-5' exonuclease</fullName>
        <ecNumber>3.1.11.-</ecNumber>
    </recommendedName>
    <alternativeName>
        <fullName>Werner Syndrome-like exonuclease</fullName>
    </alternativeName>
</protein>
<sequence>MERFLTKMPIKSKANEVPKKEAVAKKETPKVARKATKKDTPKELKDKENAGDDNTPKQTKGRPGRPAAKRKNLDTPDVKDEKIAMEEENPPKRRSSRLTRSTRSMAEDGSPSPEKEKPEKLPFIKYKGAIKYFTESQDIAASADDVLQWVEKQKDDVVPMAFDMEWPFSFQTGPGKSSVIQICVDEKCCYIYQLTNVKKLPAALVALINHPKVRLHGVNIKNDFRKLARDFPEVTAEPLIEKCVDLGLWCNEVCETGGRWSLERLTNFIAKKAMDKSKKVRMSKWHVIPLDENQLMYAAIDVYIGQVIYRELERREKVKIKNEEEFKEKNGDAAFKAMKTLGETFLTKINEVTL</sequence>
<evidence type="ECO:0000250" key="1">
    <source>
        <dbReference type="UniProtKB" id="Q14191"/>
    </source>
</evidence>
<evidence type="ECO:0000250" key="2">
    <source>
        <dbReference type="UniProtKB" id="Q9VE86"/>
    </source>
</evidence>
<evidence type="ECO:0000255" key="3"/>
<evidence type="ECO:0000256" key="4">
    <source>
        <dbReference type="SAM" id="MobiDB-lite"/>
    </source>
</evidence>
<evidence type="ECO:0000305" key="5"/>
<evidence type="ECO:0000312" key="6">
    <source>
        <dbReference type="EMBL" id="EDX12456.1"/>
    </source>
</evidence>
<accession>B4QUF6</accession>
<comment type="function">
    <text evidence="2">Has exonuclease activity on both single-stranded and duplex templates bearing overhangs, but not blunt ended duplex DNA, and cleaves in a 3'-5' direction. Essential for the formation of DNA replication focal centers. Has an important role in maintaining genome stability.</text>
</comment>
<comment type="subcellular location">
    <subcellularLocation>
        <location evidence="2">Nucleus</location>
    </subcellularLocation>
</comment>
<comment type="similarity">
    <text evidence="5">Belongs to the WRNexo family.</text>
</comment>
<dbReference type="EC" id="3.1.11.-"/>
<dbReference type="EMBL" id="CM000364">
    <property type="protein sequence ID" value="EDX12456.1"/>
    <property type="molecule type" value="Genomic_DNA"/>
</dbReference>
<dbReference type="SMR" id="B4QUF6"/>
<dbReference type="STRING" id="7240.B4QUF6"/>
<dbReference type="EnsemblMetazoa" id="FBtr0220088">
    <property type="protein sequence ID" value="FBpp0218580"/>
    <property type="gene ID" value="FBgn0191656"/>
</dbReference>
<dbReference type="EnsemblMetazoa" id="XM_002102917.4">
    <property type="protein sequence ID" value="XP_002102953.1"/>
    <property type="gene ID" value="LOC6727574"/>
</dbReference>
<dbReference type="GeneID" id="6727574"/>
<dbReference type="KEGG" id="dsi:Dsimw501_GD20178"/>
<dbReference type="HOGENOM" id="CLU_845357_0_0_1"/>
<dbReference type="OMA" id="CCYVYQL"/>
<dbReference type="OrthoDB" id="10261556at2759"/>
<dbReference type="PhylomeDB" id="B4QUF6"/>
<dbReference type="ChiTaRS" id="WRNexo">
    <property type="organism name" value="fly"/>
</dbReference>
<dbReference type="Proteomes" id="UP000000304">
    <property type="component" value="Chromosome 3R"/>
</dbReference>
<dbReference type="Bgee" id="FBgn0191656">
    <property type="expression patterns" value="Expressed in embryo and 3 other cell types or tissues"/>
</dbReference>
<dbReference type="GO" id="GO:0005634">
    <property type="term" value="C:nucleus"/>
    <property type="evidence" value="ECO:0000250"/>
    <property type="project" value="UniProtKB"/>
</dbReference>
<dbReference type="GO" id="GO:0008408">
    <property type="term" value="F:3'-5' exonuclease activity"/>
    <property type="evidence" value="ECO:0000250"/>
    <property type="project" value="UniProtKB"/>
</dbReference>
<dbReference type="GO" id="GO:0046872">
    <property type="term" value="F:metal ion binding"/>
    <property type="evidence" value="ECO:0007669"/>
    <property type="project" value="UniProtKB-KW"/>
</dbReference>
<dbReference type="GO" id="GO:0003676">
    <property type="term" value="F:nucleic acid binding"/>
    <property type="evidence" value="ECO:0007669"/>
    <property type="project" value="InterPro"/>
</dbReference>
<dbReference type="GO" id="GO:0045950">
    <property type="term" value="P:negative regulation of mitotic recombination"/>
    <property type="evidence" value="ECO:0000250"/>
    <property type="project" value="UniProtKB"/>
</dbReference>
<dbReference type="GO" id="GO:0006139">
    <property type="term" value="P:nucleobase-containing compound metabolic process"/>
    <property type="evidence" value="ECO:0007669"/>
    <property type="project" value="InterPro"/>
</dbReference>
<dbReference type="CDD" id="cd06141">
    <property type="entry name" value="WRN_exo"/>
    <property type="match status" value="1"/>
</dbReference>
<dbReference type="FunFam" id="3.30.420.10:FF:000104">
    <property type="entry name" value="Werner Syndrome-like exonuclease"/>
    <property type="match status" value="1"/>
</dbReference>
<dbReference type="Gene3D" id="3.30.420.10">
    <property type="entry name" value="Ribonuclease H-like superfamily/Ribonuclease H"/>
    <property type="match status" value="1"/>
</dbReference>
<dbReference type="InterPro" id="IPR002562">
    <property type="entry name" value="3'-5'_exonuclease_dom"/>
</dbReference>
<dbReference type="InterPro" id="IPR051132">
    <property type="entry name" value="3-5_Exonuclease_domain"/>
</dbReference>
<dbReference type="InterPro" id="IPR012337">
    <property type="entry name" value="RNaseH-like_sf"/>
</dbReference>
<dbReference type="InterPro" id="IPR036397">
    <property type="entry name" value="RNaseH_sf"/>
</dbReference>
<dbReference type="PANTHER" id="PTHR13620:SF109">
    <property type="entry name" value="3'-5' EXONUCLEASE"/>
    <property type="match status" value="1"/>
</dbReference>
<dbReference type="PANTHER" id="PTHR13620">
    <property type="entry name" value="3-5 EXONUCLEASE"/>
    <property type="match status" value="1"/>
</dbReference>
<dbReference type="Pfam" id="PF01612">
    <property type="entry name" value="DNA_pol_A_exo1"/>
    <property type="match status" value="1"/>
</dbReference>
<dbReference type="SMART" id="SM00474">
    <property type="entry name" value="35EXOc"/>
    <property type="match status" value="1"/>
</dbReference>
<dbReference type="SUPFAM" id="SSF53098">
    <property type="entry name" value="Ribonuclease H-like"/>
    <property type="match status" value="1"/>
</dbReference>
<organism>
    <name type="scientific">Drosophila simulans</name>
    <name type="common">Fruit fly</name>
    <dbReference type="NCBI Taxonomy" id="7240"/>
    <lineage>
        <taxon>Eukaryota</taxon>
        <taxon>Metazoa</taxon>
        <taxon>Ecdysozoa</taxon>
        <taxon>Arthropoda</taxon>
        <taxon>Hexapoda</taxon>
        <taxon>Insecta</taxon>
        <taxon>Pterygota</taxon>
        <taxon>Neoptera</taxon>
        <taxon>Endopterygota</taxon>
        <taxon>Diptera</taxon>
        <taxon>Brachycera</taxon>
        <taxon>Muscomorpha</taxon>
        <taxon>Ephydroidea</taxon>
        <taxon>Drosophilidae</taxon>
        <taxon>Drosophila</taxon>
        <taxon>Sophophora</taxon>
    </lineage>
</organism>
<name>WRNXO_DROSI</name>
<feature type="chain" id="PRO_0000399381" description="3'-5' exonuclease">
    <location>
        <begin position="1"/>
        <end position="354"/>
    </location>
</feature>
<feature type="domain" description="3'-5' exonuclease" evidence="3">
    <location>
        <begin position="149"/>
        <end position="314"/>
    </location>
</feature>
<feature type="region of interest" description="Disordered" evidence="4">
    <location>
        <begin position="1"/>
        <end position="120"/>
    </location>
</feature>
<feature type="compositionally biased region" description="Basic and acidic residues" evidence="4">
    <location>
        <begin position="13"/>
        <end position="30"/>
    </location>
</feature>
<feature type="compositionally biased region" description="Basic and acidic residues" evidence="4">
    <location>
        <begin position="37"/>
        <end position="50"/>
    </location>
</feature>
<feature type="compositionally biased region" description="Basic residues" evidence="4">
    <location>
        <begin position="59"/>
        <end position="70"/>
    </location>
</feature>
<feature type="compositionally biased region" description="Basic and acidic residues" evidence="4">
    <location>
        <begin position="71"/>
        <end position="91"/>
    </location>
</feature>
<feature type="binding site" evidence="2">
    <location>
        <position position="163"/>
    </location>
    <ligand>
        <name>Mg(2+)</name>
        <dbReference type="ChEBI" id="CHEBI:18420"/>
        <label>1</label>
        <note>catalytic</note>
    </ligand>
</feature>
<feature type="binding site" evidence="2">
    <location>
        <position position="163"/>
    </location>
    <ligand>
        <name>Mg(2+)</name>
        <dbReference type="ChEBI" id="CHEBI:18420"/>
        <label>2</label>
        <note>catalytic</note>
    </ligand>
</feature>
<feature type="binding site" evidence="2">
    <location>
        <position position="165"/>
    </location>
    <ligand>
        <name>Mg(2+)</name>
        <dbReference type="ChEBI" id="CHEBI:18420"/>
        <label>1</label>
        <note>catalytic</note>
    </ligand>
</feature>
<feature type="binding site" evidence="1">
    <location>
        <position position="301"/>
    </location>
    <ligand>
        <name>Mg(2+)</name>
        <dbReference type="ChEBI" id="CHEBI:18420"/>
        <label>1</label>
        <note>catalytic</note>
    </ligand>
</feature>
<feature type="modified residue" description="Phosphoserine" evidence="2">
    <location>
        <position position="104"/>
    </location>
</feature>
<feature type="modified residue" description="Phosphoserine" evidence="2">
    <location>
        <position position="110"/>
    </location>
</feature>
<feature type="modified residue" description="Phosphoserine" evidence="2">
    <location>
        <position position="112"/>
    </location>
</feature>
<keyword id="KW-0269">Exonuclease</keyword>
<keyword id="KW-0378">Hydrolase</keyword>
<keyword id="KW-0460">Magnesium</keyword>
<keyword id="KW-0479">Metal-binding</keyword>
<keyword id="KW-0540">Nuclease</keyword>
<keyword id="KW-0539">Nucleus</keyword>
<keyword id="KW-0597">Phosphoprotein</keyword>
<keyword id="KW-1185">Reference proteome</keyword>